<organism>
    <name type="scientific">Legionella pneumophila (strain Corby)</name>
    <dbReference type="NCBI Taxonomy" id="400673"/>
    <lineage>
        <taxon>Bacteria</taxon>
        <taxon>Pseudomonadati</taxon>
        <taxon>Pseudomonadota</taxon>
        <taxon>Gammaproteobacteria</taxon>
        <taxon>Legionellales</taxon>
        <taxon>Legionellaceae</taxon>
        <taxon>Legionella</taxon>
    </lineage>
</organism>
<evidence type="ECO:0000255" key="1">
    <source>
        <dbReference type="HAMAP-Rule" id="MF_00087"/>
    </source>
</evidence>
<evidence type="ECO:0000305" key="2"/>
<name>HEM1_LEGPC</name>
<feature type="chain" id="PRO_0000335049" description="Glutamyl-tRNA reductase">
    <location>
        <begin position="1"/>
        <end position="424"/>
    </location>
</feature>
<feature type="active site" description="Nucleophile" evidence="1">
    <location>
        <position position="50"/>
    </location>
</feature>
<feature type="binding site" evidence="1">
    <location>
        <begin position="49"/>
        <end position="52"/>
    </location>
    <ligand>
        <name>substrate</name>
    </ligand>
</feature>
<feature type="binding site" evidence="1">
    <location>
        <position position="105"/>
    </location>
    <ligand>
        <name>substrate</name>
    </ligand>
</feature>
<feature type="binding site" evidence="1">
    <location>
        <begin position="110"/>
        <end position="112"/>
    </location>
    <ligand>
        <name>substrate</name>
    </ligand>
</feature>
<feature type="binding site" evidence="1">
    <location>
        <position position="116"/>
    </location>
    <ligand>
        <name>substrate</name>
    </ligand>
</feature>
<feature type="binding site" evidence="1">
    <location>
        <begin position="185"/>
        <end position="190"/>
    </location>
    <ligand>
        <name>NADP(+)</name>
        <dbReference type="ChEBI" id="CHEBI:58349"/>
    </ligand>
</feature>
<feature type="site" description="Important for activity" evidence="1">
    <location>
        <position position="95"/>
    </location>
</feature>
<reference key="1">
    <citation type="submission" date="2006-11" db="EMBL/GenBank/DDBJ databases">
        <title>Identification and characterization of a new conjugation/ type IVA secretion system (trb/tra) of L. pneumophila Corby localized on a mobile genomic island.</title>
        <authorList>
            <person name="Gloeckner G."/>
            <person name="Albert-Weissenberger C."/>
            <person name="Weinmann E."/>
            <person name="Jacobi S."/>
            <person name="Schunder E."/>
            <person name="Steinert M."/>
            <person name="Buchrieser C."/>
            <person name="Hacker J."/>
            <person name="Heuner K."/>
        </authorList>
    </citation>
    <scope>NUCLEOTIDE SEQUENCE [LARGE SCALE GENOMIC DNA]</scope>
    <source>
        <strain>Corby</strain>
    </source>
</reference>
<protein>
    <recommendedName>
        <fullName evidence="1">Glutamyl-tRNA reductase</fullName>
        <shortName evidence="1">GluTR</shortName>
        <ecNumber evidence="1">1.2.1.70</ecNumber>
    </recommendedName>
</protein>
<keyword id="KW-0521">NADP</keyword>
<keyword id="KW-0560">Oxidoreductase</keyword>
<keyword id="KW-0627">Porphyrin biosynthesis</keyword>
<proteinExistence type="inferred from homology"/>
<comment type="function">
    <text evidence="1">Catalyzes the NADPH-dependent reduction of glutamyl-tRNA(Glu) to glutamate 1-semialdehyde (GSA).</text>
</comment>
<comment type="catalytic activity">
    <reaction evidence="1">
        <text>(S)-4-amino-5-oxopentanoate + tRNA(Glu) + NADP(+) = L-glutamyl-tRNA(Glu) + NADPH + H(+)</text>
        <dbReference type="Rhea" id="RHEA:12344"/>
        <dbReference type="Rhea" id="RHEA-COMP:9663"/>
        <dbReference type="Rhea" id="RHEA-COMP:9680"/>
        <dbReference type="ChEBI" id="CHEBI:15378"/>
        <dbReference type="ChEBI" id="CHEBI:57501"/>
        <dbReference type="ChEBI" id="CHEBI:57783"/>
        <dbReference type="ChEBI" id="CHEBI:58349"/>
        <dbReference type="ChEBI" id="CHEBI:78442"/>
        <dbReference type="ChEBI" id="CHEBI:78520"/>
        <dbReference type="EC" id="1.2.1.70"/>
    </reaction>
</comment>
<comment type="pathway">
    <text evidence="1">Porphyrin-containing compound metabolism; protoporphyrin-IX biosynthesis; 5-aminolevulinate from L-glutamyl-tRNA(Glu): step 1/2.</text>
</comment>
<comment type="subunit">
    <text evidence="1">Homodimer.</text>
</comment>
<comment type="domain">
    <text evidence="1">Possesses an unusual extended V-shaped dimeric structure with each monomer consisting of three distinct domains arranged along a curved 'spinal' alpha-helix. The N-terminal catalytic domain specifically recognizes the glutamate moiety of the substrate. The second domain is the NADPH-binding domain, and the third C-terminal domain is responsible for dimerization.</text>
</comment>
<comment type="miscellaneous">
    <text evidence="1">During catalysis, the active site Cys acts as a nucleophile attacking the alpha-carbonyl group of tRNA-bound glutamate with the formation of a thioester intermediate between enzyme and glutamate, and the concomitant release of tRNA(Glu). The thioester intermediate is finally reduced by direct hydride transfer from NADPH, to form the product GSA.</text>
</comment>
<comment type="similarity">
    <text evidence="1">Belongs to the glutamyl-tRNA reductase family.</text>
</comment>
<comment type="sequence caution" evidence="2">
    <conflict type="erroneous initiation">
        <sequence resource="EMBL-CDS" id="ABQ55736"/>
    </conflict>
</comment>
<accession>A5IED6</accession>
<dbReference type="EC" id="1.2.1.70" evidence="1"/>
<dbReference type="EMBL" id="CP000675">
    <property type="protein sequence ID" value="ABQ55736.1"/>
    <property type="status" value="ALT_INIT"/>
    <property type="molecule type" value="Genomic_DNA"/>
</dbReference>
<dbReference type="RefSeq" id="WP_013101756.1">
    <property type="nucleotide sequence ID" value="NZ_JAPMSS010000012.1"/>
</dbReference>
<dbReference type="SMR" id="A5IED6"/>
<dbReference type="KEGG" id="lpc:LPC_1803"/>
<dbReference type="HOGENOM" id="CLU_035113_2_2_6"/>
<dbReference type="UniPathway" id="UPA00251">
    <property type="reaction ID" value="UER00316"/>
</dbReference>
<dbReference type="GO" id="GO:0008883">
    <property type="term" value="F:glutamyl-tRNA reductase activity"/>
    <property type="evidence" value="ECO:0007669"/>
    <property type="project" value="UniProtKB-UniRule"/>
</dbReference>
<dbReference type="GO" id="GO:0050661">
    <property type="term" value="F:NADP binding"/>
    <property type="evidence" value="ECO:0007669"/>
    <property type="project" value="InterPro"/>
</dbReference>
<dbReference type="GO" id="GO:0019353">
    <property type="term" value="P:protoporphyrinogen IX biosynthetic process from glutamate"/>
    <property type="evidence" value="ECO:0007669"/>
    <property type="project" value="TreeGrafter"/>
</dbReference>
<dbReference type="CDD" id="cd05213">
    <property type="entry name" value="NAD_bind_Glutamyl_tRNA_reduct"/>
    <property type="match status" value="1"/>
</dbReference>
<dbReference type="FunFam" id="3.30.460.30:FF:000001">
    <property type="entry name" value="Glutamyl-tRNA reductase"/>
    <property type="match status" value="1"/>
</dbReference>
<dbReference type="FunFam" id="3.40.50.720:FF:000031">
    <property type="entry name" value="Glutamyl-tRNA reductase"/>
    <property type="match status" value="1"/>
</dbReference>
<dbReference type="Gene3D" id="3.30.460.30">
    <property type="entry name" value="Glutamyl-tRNA reductase, N-terminal domain"/>
    <property type="match status" value="1"/>
</dbReference>
<dbReference type="Gene3D" id="3.40.50.720">
    <property type="entry name" value="NAD(P)-binding Rossmann-like Domain"/>
    <property type="match status" value="1"/>
</dbReference>
<dbReference type="HAMAP" id="MF_00087">
    <property type="entry name" value="Glu_tRNA_reductase"/>
    <property type="match status" value="1"/>
</dbReference>
<dbReference type="InterPro" id="IPR000343">
    <property type="entry name" value="4pyrrol_synth_GluRdtase"/>
</dbReference>
<dbReference type="InterPro" id="IPR015896">
    <property type="entry name" value="4pyrrol_synth_GluRdtase_dimer"/>
</dbReference>
<dbReference type="InterPro" id="IPR015895">
    <property type="entry name" value="4pyrrol_synth_GluRdtase_N"/>
</dbReference>
<dbReference type="InterPro" id="IPR036453">
    <property type="entry name" value="GluRdtase_dimer_dom_sf"/>
</dbReference>
<dbReference type="InterPro" id="IPR036343">
    <property type="entry name" value="GluRdtase_N_sf"/>
</dbReference>
<dbReference type="InterPro" id="IPR036291">
    <property type="entry name" value="NAD(P)-bd_dom_sf"/>
</dbReference>
<dbReference type="InterPro" id="IPR006151">
    <property type="entry name" value="Shikm_DH/Glu-tRNA_Rdtase"/>
</dbReference>
<dbReference type="NCBIfam" id="TIGR01035">
    <property type="entry name" value="hemA"/>
    <property type="match status" value="1"/>
</dbReference>
<dbReference type="PANTHER" id="PTHR43013">
    <property type="entry name" value="GLUTAMYL-TRNA REDUCTASE"/>
    <property type="match status" value="1"/>
</dbReference>
<dbReference type="PANTHER" id="PTHR43013:SF1">
    <property type="entry name" value="GLUTAMYL-TRNA REDUCTASE"/>
    <property type="match status" value="1"/>
</dbReference>
<dbReference type="Pfam" id="PF00745">
    <property type="entry name" value="GlutR_dimer"/>
    <property type="match status" value="1"/>
</dbReference>
<dbReference type="Pfam" id="PF05201">
    <property type="entry name" value="GlutR_N"/>
    <property type="match status" value="1"/>
</dbReference>
<dbReference type="Pfam" id="PF01488">
    <property type="entry name" value="Shikimate_DH"/>
    <property type="match status" value="1"/>
</dbReference>
<dbReference type="PIRSF" id="PIRSF000445">
    <property type="entry name" value="4pyrrol_synth_GluRdtase"/>
    <property type="match status" value="1"/>
</dbReference>
<dbReference type="SUPFAM" id="SSF69742">
    <property type="entry name" value="Glutamyl tRNA-reductase catalytic, N-terminal domain"/>
    <property type="match status" value="1"/>
</dbReference>
<dbReference type="SUPFAM" id="SSF69075">
    <property type="entry name" value="Glutamyl tRNA-reductase dimerization domain"/>
    <property type="match status" value="1"/>
</dbReference>
<dbReference type="SUPFAM" id="SSF51735">
    <property type="entry name" value="NAD(P)-binding Rossmann-fold domains"/>
    <property type="match status" value="1"/>
</dbReference>
<gene>
    <name evidence="1" type="primary">hemA</name>
    <name type="ordered locus">LPC_1803</name>
</gene>
<sequence>MVFVACGLNHKTAPIHVREKVALQPAMQDSLLSSLLDLPEVNEAAILSTCNRTEIYCDTNTPEVLGNWLAHEHQLSEELLSQFLYIHQGKEGIKHTLRVASGLDSMMIGEPQILGQMKQAYQHACRLGTVKTQLRPVFEYIFRASKRIRTRSGIGANPVSIAYAAVQLIGQLFKNYHSLSVFLIGSGETASLVAKYLHQHGVHRFLIASRTLENAQKLAETFGGKTLSIGDIPQYLPLADVVISATACPLPFINKSLVEHALEQRNHAPMFLLDLAVPRDIEGNVNELEQVHLYNVDDLQSMIEKGMNERRNAALQAEQLIESELDNYIRWHRSLRAKDVICDYRNQMHTLAQQELQRALKKISAGQNQQDVLNEFSMRLVNKLTHNPTIGLRQIAWDNREDLLDLARYLFDTTANQSLYEEIS</sequence>